<feature type="chain" id="PRO_0000192191" description="33 kDa chaperonin">
    <location>
        <begin position="1"/>
        <end position="301"/>
    </location>
</feature>
<feature type="disulfide bond" description="Redox-active" evidence="1">
    <location>
        <begin position="247"/>
        <end position="249"/>
    </location>
</feature>
<feature type="disulfide bond" description="Redox-active" evidence="1">
    <location>
        <begin position="280"/>
        <end position="283"/>
    </location>
</feature>
<dbReference type="EMBL" id="AE017126">
    <property type="protein sequence ID" value="AAQ00072.1"/>
    <property type="molecule type" value="Genomic_DNA"/>
</dbReference>
<dbReference type="RefSeq" id="NP_875419.1">
    <property type="nucleotide sequence ID" value="NC_005042.1"/>
</dbReference>
<dbReference type="RefSeq" id="WP_011125179.1">
    <property type="nucleotide sequence ID" value="NC_005042.1"/>
</dbReference>
<dbReference type="SMR" id="Q7VBR5"/>
<dbReference type="STRING" id="167539.Pro_1027"/>
<dbReference type="EnsemblBacteria" id="AAQ00072">
    <property type="protein sequence ID" value="AAQ00072"/>
    <property type="gene ID" value="Pro_1027"/>
</dbReference>
<dbReference type="KEGG" id="pma:Pro_1027"/>
<dbReference type="PATRIC" id="fig|167539.5.peg.1078"/>
<dbReference type="eggNOG" id="COG1281">
    <property type="taxonomic scope" value="Bacteria"/>
</dbReference>
<dbReference type="HOGENOM" id="CLU_054493_1_0_3"/>
<dbReference type="OrthoDB" id="9776534at2"/>
<dbReference type="Proteomes" id="UP000001420">
    <property type="component" value="Chromosome"/>
</dbReference>
<dbReference type="GO" id="GO:0005737">
    <property type="term" value="C:cytoplasm"/>
    <property type="evidence" value="ECO:0007669"/>
    <property type="project" value="UniProtKB-SubCell"/>
</dbReference>
<dbReference type="GO" id="GO:0044183">
    <property type="term" value="F:protein folding chaperone"/>
    <property type="evidence" value="ECO:0007669"/>
    <property type="project" value="TreeGrafter"/>
</dbReference>
<dbReference type="GO" id="GO:0051082">
    <property type="term" value="F:unfolded protein binding"/>
    <property type="evidence" value="ECO:0007669"/>
    <property type="project" value="UniProtKB-UniRule"/>
</dbReference>
<dbReference type="GO" id="GO:0042026">
    <property type="term" value="P:protein refolding"/>
    <property type="evidence" value="ECO:0007669"/>
    <property type="project" value="TreeGrafter"/>
</dbReference>
<dbReference type="CDD" id="cd00498">
    <property type="entry name" value="Hsp33"/>
    <property type="match status" value="1"/>
</dbReference>
<dbReference type="Gene3D" id="3.55.30.10">
    <property type="entry name" value="Hsp33 domain"/>
    <property type="match status" value="1"/>
</dbReference>
<dbReference type="Gene3D" id="3.90.1280.10">
    <property type="entry name" value="HSP33 redox switch-like"/>
    <property type="match status" value="1"/>
</dbReference>
<dbReference type="HAMAP" id="MF_00117">
    <property type="entry name" value="HslO"/>
    <property type="match status" value="1"/>
</dbReference>
<dbReference type="InterPro" id="IPR000397">
    <property type="entry name" value="Heat_shock_Hsp33"/>
</dbReference>
<dbReference type="InterPro" id="IPR016154">
    <property type="entry name" value="Heat_shock_Hsp33_C"/>
</dbReference>
<dbReference type="InterPro" id="IPR016153">
    <property type="entry name" value="Heat_shock_Hsp33_N"/>
</dbReference>
<dbReference type="NCBIfam" id="NF001033">
    <property type="entry name" value="PRK00114.1"/>
    <property type="match status" value="1"/>
</dbReference>
<dbReference type="PANTHER" id="PTHR30111">
    <property type="entry name" value="33 KDA CHAPERONIN"/>
    <property type="match status" value="1"/>
</dbReference>
<dbReference type="PANTHER" id="PTHR30111:SF1">
    <property type="entry name" value="33 KDA CHAPERONIN"/>
    <property type="match status" value="1"/>
</dbReference>
<dbReference type="Pfam" id="PF01430">
    <property type="entry name" value="HSP33"/>
    <property type="match status" value="1"/>
</dbReference>
<dbReference type="PIRSF" id="PIRSF005261">
    <property type="entry name" value="Heat_shock_Hsp33"/>
    <property type="match status" value="1"/>
</dbReference>
<dbReference type="SUPFAM" id="SSF64397">
    <property type="entry name" value="Hsp33 domain"/>
    <property type="match status" value="1"/>
</dbReference>
<dbReference type="SUPFAM" id="SSF118352">
    <property type="entry name" value="HSP33 redox switch-like"/>
    <property type="match status" value="1"/>
</dbReference>
<comment type="function">
    <text evidence="1">Redox regulated molecular chaperone. Protects both thermally unfolding and oxidatively damaged proteins from irreversible aggregation. Plays an important role in the bacterial defense system toward oxidative stress.</text>
</comment>
<comment type="subcellular location">
    <subcellularLocation>
        <location evidence="1">Cytoplasm</location>
    </subcellularLocation>
</comment>
<comment type="PTM">
    <text evidence="1">Under oxidizing conditions two disulfide bonds are formed involving the reactive cysteines. Under reducing conditions zinc is bound to the reactive cysteines and the protein is inactive.</text>
</comment>
<comment type="similarity">
    <text evidence="1">Belongs to the HSP33 family.</text>
</comment>
<name>HSLO_PROMA</name>
<reference key="1">
    <citation type="journal article" date="2003" name="Proc. Natl. Acad. Sci. U.S.A.">
        <title>Genome sequence of the cyanobacterium Prochlorococcus marinus SS120, a nearly minimal oxyphototrophic genome.</title>
        <authorList>
            <person name="Dufresne A."/>
            <person name="Salanoubat M."/>
            <person name="Partensky F."/>
            <person name="Artiguenave F."/>
            <person name="Axmann I.M."/>
            <person name="Barbe V."/>
            <person name="Duprat S."/>
            <person name="Galperin M.Y."/>
            <person name="Koonin E.V."/>
            <person name="Le Gall F."/>
            <person name="Makarova K.S."/>
            <person name="Ostrowski M."/>
            <person name="Oztas S."/>
            <person name="Robert C."/>
            <person name="Rogozin I.B."/>
            <person name="Scanlan D.J."/>
            <person name="Tandeau de Marsac N."/>
            <person name="Weissenbach J."/>
            <person name="Wincker P."/>
            <person name="Wolf Y.I."/>
            <person name="Hess W.R."/>
        </authorList>
    </citation>
    <scope>NUCLEOTIDE SEQUENCE [LARGE SCALE GENOMIC DNA]</scope>
    <source>
        <strain>SARG / CCMP1375 / SS120</strain>
    </source>
</reference>
<organism>
    <name type="scientific">Prochlorococcus marinus (strain SARG / CCMP1375 / SS120)</name>
    <dbReference type="NCBI Taxonomy" id="167539"/>
    <lineage>
        <taxon>Bacteria</taxon>
        <taxon>Bacillati</taxon>
        <taxon>Cyanobacteriota</taxon>
        <taxon>Cyanophyceae</taxon>
        <taxon>Synechococcales</taxon>
        <taxon>Prochlorococcaceae</taxon>
        <taxon>Prochlorococcus</taxon>
    </lineage>
</organism>
<keyword id="KW-0143">Chaperone</keyword>
<keyword id="KW-0963">Cytoplasm</keyword>
<keyword id="KW-1015">Disulfide bond</keyword>
<keyword id="KW-0676">Redox-active center</keyword>
<keyword id="KW-1185">Reference proteome</keyword>
<keyword id="KW-0862">Zinc</keyword>
<proteinExistence type="inferred from homology"/>
<protein>
    <recommendedName>
        <fullName evidence="1">33 kDa chaperonin</fullName>
    </recommendedName>
    <alternativeName>
        <fullName evidence="1">Heat shock protein 33 homolog</fullName>
        <shortName evidence="1">HSP33</shortName>
    </alternativeName>
</protein>
<evidence type="ECO:0000255" key="1">
    <source>
        <dbReference type="HAMAP-Rule" id="MF_00117"/>
    </source>
</evidence>
<sequence length="301" mass="32991">MADSLVRATAANGSIALVAVLTTESTKEARRRHSLSYLTTIMLSRAMSAGLLLASSMKVKQGRVTIKIQSDGPLQGLNVDAGRDGTVRGYVGNPSLELDLIKTSQGNHYFDFKKATGKGYLHVTRDIGKGEPFTSTVEIEGGGIGEDIASYLLHSEQVQSAVFVGEIIEDQEFICSGALIAQILPSAVENKTLINLLDEECKKITGFSQHLLASKDNLPSLFSHLFPNLNPKIIKTMDNNQSISFKCRCSRDRSISALKLLGKEELIEIMNEDKKSELTCNFCNEIYNVNEQELKTIIGEF</sequence>
<accession>Q7VBR5</accession>
<gene>
    <name evidence="1" type="primary">hslO</name>
    <name type="ordered locus">Pro_1027</name>
</gene>